<evidence type="ECO:0000255" key="1">
    <source>
        <dbReference type="PROSITE-ProRule" id="PRU00625"/>
    </source>
</evidence>
<evidence type="ECO:0000269" key="2">
    <source>
    </source>
</evidence>
<evidence type="ECO:0000269" key="3">
    <source>
    </source>
</evidence>
<evidence type="ECO:0000303" key="4">
    <source>
    </source>
</evidence>
<evidence type="ECO:0000305" key="5"/>
<evidence type="ECO:0000312" key="6">
    <source>
        <dbReference type="EMBL" id="AQK58964.1"/>
    </source>
</evidence>
<evidence type="ECO:0000312" key="7">
    <source>
        <dbReference type="EMBL" id="PWZ26959.1"/>
    </source>
</evidence>
<comment type="function">
    <text evidence="2">Transcription factor that negatively regulates the expression of caffeic acid O-methyl-transferase genes (COMTs) and of other genes involved in the biosynthesis of lignin, thus preventing lignification.</text>
</comment>
<comment type="subcellular location">
    <subcellularLocation>
        <location evidence="1">Nucleus</location>
    </subcellularLocation>
</comment>
<comment type="tissue specificity">
    <text evidence="2">Mainly expressed in the aerial parts and, to a lower extent, in roots.</text>
</comment>
<comment type="induction">
    <text evidence="2 3">By wounding (PubMed:16941210). Triggered by MYB69 to repress lignin biosynthesis (PubMed:35640133).</text>
</comment>
<comment type="online information" name="https://grassius.org/tfomecollection.php">
    <link uri="https://grassius.org/tfomeinfor.php?clone=pUT1150"/>
</comment>
<protein>
    <recommendedName>
        <fullName evidence="4">Myb transcription factor 42</fullName>
        <shortName evidence="4">ZmMYB42</shortName>
    </recommendedName>
    <alternativeName>
        <fullName evidence="7">Myb-related protein Zm38</fullName>
    </alternativeName>
</protein>
<name>MYB42_MAIZE</name>
<reference key="1">
    <citation type="journal article" date="2006" name="Plant Mol. Biol.">
        <title>Down-regulation of the maize and Arabidopsis thaliana caffeic acid O-methyl-transferase genes by two new maize R2R3-MYB transcription factors.</title>
        <authorList>
            <person name="Fornale S."/>
            <person name="Sonbol F.-M."/>
            <person name="Maes T."/>
            <person name="Capellades M."/>
            <person name="Puigdomenech P."/>
            <person name="Rigau J."/>
            <person name="Caparros-Ruiz D."/>
        </authorList>
    </citation>
    <scope>NUCLEOTIDE SEQUENCE [MRNA]</scope>
    <scope>FUNCTION</scope>
    <scope>INDUCTION BY WOUNDING</scope>
    <scope>TISSUE SPECIFICITY</scope>
    <source>
        <strain>cv. Wisconsin 64A</strain>
        <tissue>Root</tissue>
    </source>
</reference>
<reference key="2">
    <citation type="journal article" date="2009" name="Science">
        <title>The B73 maize genome: complexity, diversity, and dynamics.</title>
        <authorList>
            <person name="Schnable P.S."/>
            <person name="Ware D."/>
            <person name="Fulton R.S."/>
            <person name="Stein J.C."/>
            <person name="Wei F."/>
            <person name="Pasternak S."/>
            <person name="Liang C."/>
            <person name="Zhang J."/>
            <person name="Fulton L."/>
            <person name="Graves T.A."/>
            <person name="Minx P."/>
            <person name="Reily A.D."/>
            <person name="Courtney L."/>
            <person name="Kruchowski S.S."/>
            <person name="Tomlinson C."/>
            <person name="Strong C."/>
            <person name="Delehaunty K."/>
            <person name="Fronick C."/>
            <person name="Courtney B."/>
            <person name="Rock S.M."/>
            <person name="Belter E."/>
            <person name="Du F."/>
            <person name="Kim K."/>
            <person name="Abbott R.M."/>
            <person name="Cotton M."/>
            <person name="Levy A."/>
            <person name="Marchetto P."/>
            <person name="Ochoa K."/>
            <person name="Jackson S.M."/>
            <person name="Gillam B."/>
            <person name="Chen W."/>
            <person name="Yan L."/>
            <person name="Higginbotham J."/>
            <person name="Cardenas M."/>
            <person name="Waligorski J."/>
            <person name="Applebaum E."/>
            <person name="Phelps L."/>
            <person name="Falcone J."/>
            <person name="Kanchi K."/>
            <person name="Thane T."/>
            <person name="Scimone A."/>
            <person name="Thane N."/>
            <person name="Henke J."/>
            <person name="Wang T."/>
            <person name="Ruppert J."/>
            <person name="Shah N."/>
            <person name="Rotter K."/>
            <person name="Hodges J."/>
            <person name="Ingenthron E."/>
            <person name="Cordes M."/>
            <person name="Kohlberg S."/>
            <person name="Sgro J."/>
            <person name="Delgado B."/>
            <person name="Mead K."/>
            <person name="Chinwalla A."/>
            <person name="Leonard S."/>
            <person name="Crouse K."/>
            <person name="Collura K."/>
            <person name="Kudrna D."/>
            <person name="Currie J."/>
            <person name="He R."/>
            <person name="Angelova A."/>
            <person name="Rajasekar S."/>
            <person name="Mueller T."/>
            <person name="Lomeli R."/>
            <person name="Scara G."/>
            <person name="Ko A."/>
            <person name="Delaney K."/>
            <person name="Wissotski M."/>
            <person name="Lopez G."/>
            <person name="Campos D."/>
            <person name="Braidotti M."/>
            <person name="Ashley E."/>
            <person name="Golser W."/>
            <person name="Kim H."/>
            <person name="Lee S."/>
            <person name="Lin J."/>
            <person name="Dujmic Z."/>
            <person name="Kim W."/>
            <person name="Talag J."/>
            <person name="Zuccolo A."/>
            <person name="Fan C."/>
            <person name="Sebastian A."/>
            <person name="Kramer M."/>
            <person name="Spiegel L."/>
            <person name="Nascimento L."/>
            <person name="Zutavern T."/>
            <person name="Miller B."/>
            <person name="Ambroise C."/>
            <person name="Muller S."/>
            <person name="Spooner W."/>
            <person name="Narechania A."/>
            <person name="Ren L."/>
            <person name="Wei S."/>
            <person name="Kumari S."/>
            <person name="Faga B."/>
            <person name="Levy M.J."/>
            <person name="McMahan L."/>
            <person name="Van Buren P."/>
            <person name="Vaughn M.W."/>
            <person name="Ying K."/>
            <person name="Yeh C.-T."/>
            <person name="Emrich S.J."/>
            <person name="Jia Y."/>
            <person name="Kalyanaraman A."/>
            <person name="Hsia A.-P."/>
            <person name="Barbazuk W.B."/>
            <person name="Baucom R.S."/>
            <person name="Brutnell T.P."/>
            <person name="Carpita N.C."/>
            <person name="Chaparro C."/>
            <person name="Chia J.-M."/>
            <person name="Deragon J.-M."/>
            <person name="Estill J.C."/>
            <person name="Fu Y."/>
            <person name="Jeddeloh J.A."/>
            <person name="Han Y."/>
            <person name="Lee H."/>
            <person name="Li P."/>
            <person name="Lisch D.R."/>
            <person name="Liu S."/>
            <person name="Liu Z."/>
            <person name="Nagel D.H."/>
            <person name="McCann M.C."/>
            <person name="SanMiguel P."/>
            <person name="Myers A.M."/>
            <person name="Nettleton D."/>
            <person name="Nguyen J."/>
            <person name="Penning B.W."/>
            <person name="Ponnala L."/>
            <person name="Schneider K.L."/>
            <person name="Schwartz D.C."/>
            <person name="Sharma A."/>
            <person name="Soderlund C."/>
            <person name="Springer N.M."/>
            <person name="Sun Q."/>
            <person name="Wang H."/>
            <person name="Waterman M."/>
            <person name="Westerman R."/>
            <person name="Wolfgruber T.K."/>
            <person name="Yang L."/>
            <person name="Yu Y."/>
            <person name="Zhang L."/>
            <person name="Zhou S."/>
            <person name="Zhu Q."/>
            <person name="Bennetzen J.L."/>
            <person name="Dawe R.K."/>
            <person name="Jiang J."/>
            <person name="Jiang N."/>
            <person name="Presting G.G."/>
            <person name="Wessler S.R."/>
            <person name="Aluru S."/>
            <person name="Martienssen R.A."/>
            <person name="Clifton S.W."/>
            <person name="McCombie W.R."/>
            <person name="Wing R.A."/>
            <person name="Wilson R.K."/>
        </authorList>
    </citation>
    <scope>NUCLEOTIDE SEQUENCE [LARGE SCALE GENOMIC DNA]</scope>
    <source>
        <strain>cv. B73</strain>
        <tissue>Seedling</tissue>
    </source>
</reference>
<reference key="3">
    <citation type="journal article" date="2018" name="Nat. Genet.">
        <title>Extensive intraspecific gene order and gene structural variations between Mo17 and other maize genomes.</title>
        <authorList>
            <person name="Sun S."/>
            <person name="Zhou Y."/>
            <person name="Chen J."/>
            <person name="Shi J."/>
            <person name="Zhao H."/>
            <person name="Zhao H."/>
            <person name="Song W."/>
            <person name="Zhang M."/>
            <person name="Cui Y."/>
            <person name="Dong X."/>
            <person name="Liu H."/>
            <person name="Ma X."/>
            <person name="Jiao Y."/>
            <person name="Wang B."/>
            <person name="Wei X."/>
            <person name="Stein J.C."/>
            <person name="Glaubitz J.C."/>
            <person name="Lu F."/>
            <person name="Yu G."/>
            <person name="Liang C."/>
            <person name="Fengler K."/>
            <person name="Li B."/>
            <person name="Rafalski A."/>
            <person name="Schnable P.S."/>
            <person name="Ware D.H."/>
            <person name="Buckler E.S."/>
            <person name="Lai J."/>
        </authorList>
    </citation>
    <scope>NUCLEOTIDE SEQUENCE [LARGE SCALE GENOMIC DNA]</scope>
    <source>
        <strain>cv. Missouri 17</strain>
        <tissue>Seedling</tissue>
    </source>
</reference>
<reference key="4">
    <citation type="journal article" date="2009" name="Plant Physiol.">
        <title>GRASSIUS: a platform for comparative regulatory genomics across the grasses.</title>
        <authorList>
            <person name="Yilmaz A."/>
            <person name="Nishiyama M.Y."/>
            <person name="Fuentes B.G."/>
            <person name="Souza G.M."/>
            <person name="Janies D."/>
            <person name="Gray J."/>
            <person name="Grotewold E."/>
        </authorList>
    </citation>
    <scope>NUCLEOTIDE SEQUENCE [LARGE SCALE MRNA]</scope>
    <source>
        <strain>cv. B73</strain>
    </source>
</reference>
<reference key="5">
    <citation type="journal article" date="2022" name="Plant Physiol.">
        <title>The transcription factor ZmMYB69 represses lignin biosynthesis by activating ZmMYB31/42 expression in maize.</title>
        <authorList>
            <person name="Qiang Z."/>
            <person name="Sun H."/>
            <person name="Ge F."/>
            <person name="Li W."/>
            <person name="Li C."/>
            <person name="Wang S."/>
            <person name="Zhang B."/>
            <person name="Zhu L."/>
            <person name="Zhang S."/>
            <person name="Wang X."/>
            <person name="Lai J."/>
            <person name="Qin F."/>
            <person name="Zhou Y."/>
            <person name="Fu Y."/>
        </authorList>
    </citation>
    <scope>INDUCTION BY MYB69</scope>
</reference>
<organism>
    <name type="scientific">Zea mays</name>
    <name type="common">Maize</name>
    <dbReference type="NCBI Taxonomy" id="4577"/>
    <lineage>
        <taxon>Eukaryota</taxon>
        <taxon>Viridiplantae</taxon>
        <taxon>Streptophyta</taxon>
        <taxon>Embryophyta</taxon>
        <taxon>Tracheophyta</taxon>
        <taxon>Spermatophyta</taxon>
        <taxon>Magnoliopsida</taxon>
        <taxon>Liliopsida</taxon>
        <taxon>Poales</taxon>
        <taxon>Poaceae</taxon>
        <taxon>PACMAD clade</taxon>
        <taxon>Panicoideae</taxon>
        <taxon>Andropogonodae</taxon>
        <taxon>Andropogoneae</taxon>
        <taxon>Tripsacinae</taxon>
        <taxon>Zea</taxon>
    </lineage>
</organism>
<keyword id="KW-0238">DNA-binding</keyword>
<keyword id="KW-0539">Nucleus</keyword>
<keyword id="KW-1185">Reference proteome</keyword>
<keyword id="KW-0677">Repeat</keyword>
<keyword id="KW-0678">Repressor</keyword>
<keyword id="KW-0804">Transcription</keyword>
<keyword id="KW-0805">Transcription regulation</keyword>
<feature type="chain" id="PRO_0000457115" description="Myb transcription factor 42">
    <location>
        <begin position="1"/>
        <end position="260"/>
    </location>
</feature>
<feature type="domain" description="HTH myb-type 1" evidence="1">
    <location>
        <begin position="9"/>
        <end position="61"/>
    </location>
</feature>
<feature type="domain" description="HTH myb-type 2" evidence="1">
    <location>
        <begin position="62"/>
        <end position="116"/>
    </location>
</feature>
<feature type="DNA-binding region" description="H-T-H motif" evidence="1">
    <location>
        <begin position="37"/>
        <end position="61"/>
    </location>
</feature>
<feature type="DNA-binding region" description="H-T-H motif" evidence="1">
    <location>
        <begin position="89"/>
        <end position="112"/>
    </location>
</feature>
<feature type="sequence conflict" description="In Ref. 1; CAJ42204 and 4; ADX60106." evidence="5" ref="1 4">
    <original>TAV</original>
    <variation>SAAA</variation>
    <location>
        <begin position="145"/>
        <end position="147"/>
    </location>
</feature>
<feature type="sequence conflict" description="In Ref. 1; CAJ42204 and 4; ADX60106." evidence="5" ref="1 4">
    <original>E</original>
    <variation>D</variation>
    <location>
        <position position="195"/>
    </location>
</feature>
<feature type="sequence conflict" description="In Ref. 1; CAJ42204 and 4; ADX60106." evidence="5" ref="1 4">
    <original>IKPAV</original>
    <variation>KPAF</variation>
    <location>
        <begin position="201"/>
        <end position="205"/>
    </location>
</feature>
<accession>K7UPS5</accession>
<accession>A0A3L6F1R1</accession>
<accession>Q2A700</accession>
<proteinExistence type="evidence at transcript level"/>
<sequence length="260" mass="28255">MGRSPCCEKAHTNRGAWTKEEDERLVAYVRAHGEGCWRSLPRAAGLLRCGKSCRLRWINYLRPDLKRGNFTADEDDLIVKLHSLLGNKWSLIAARLPGRTDNEIKNYWNTHIRRKLLGSGIDPVTHRRVAGGAATTISFQPSPNTAVAAAAETAAQAPIKAEETAAVKAPRCPDLNLDLCISPPCQHEDDGEEEEEELDLIKPAVVKREALQAGHGHGHGLCLGCGLGGQKGAAGCSCSNGHHFLGLRTSVLDFRGLEMK</sequence>
<gene>
    <name evidence="4" type="primary">MYB42</name>
    <name evidence="7" type="synonym">MYB38_1</name>
    <name evidence="6" type="ORF">ZEAMMB73_Zm00001d053220</name>
    <name evidence="7" type="ORF">Zm00014a_042672</name>
</gene>
<dbReference type="EMBL" id="AM156908">
    <property type="protein sequence ID" value="CAJ42204.1"/>
    <property type="molecule type" value="mRNA"/>
</dbReference>
<dbReference type="EMBL" id="CM000780">
    <property type="protein sequence ID" value="AQK58964.1"/>
    <property type="molecule type" value="Genomic_DNA"/>
</dbReference>
<dbReference type="EMBL" id="NCVQ01000005">
    <property type="protein sequence ID" value="PWZ26959.1"/>
    <property type="molecule type" value="Genomic_DNA"/>
</dbReference>
<dbReference type="EMBL" id="HQ858694">
    <property type="protein sequence ID" value="ADX60106.1"/>
    <property type="molecule type" value="mRNA"/>
</dbReference>
<dbReference type="RefSeq" id="NP_001106009.2">
    <property type="nucleotide sequence ID" value="NM_001112539.2"/>
</dbReference>
<dbReference type="SMR" id="K7UPS5"/>
<dbReference type="STRING" id="4577.K7UPS5"/>
<dbReference type="PaxDb" id="4577-GRMZM2G419239_P01"/>
<dbReference type="GeneID" id="100101513"/>
<dbReference type="KEGG" id="zma:100101513"/>
<dbReference type="MaizeGDB" id="9021413"/>
<dbReference type="eggNOG" id="KOG0048">
    <property type="taxonomic scope" value="Eukaryota"/>
</dbReference>
<dbReference type="HOGENOM" id="CLU_028567_23_2_1"/>
<dbReference type="InParanoid" id="K7UPS5"/>
<dbReference type="OMA" id="QPNKPNA"/>
<dbReference type="OrthoDB" id="2143914at2759"/>
<dbReference type="Proteomes" id="UP000007305">
    <property type="component" value="Unplaced"/>
</dbReference>
<dbReference type="Proteomes" id="UP000251960">
    <property type="component" value="Chromosome 4"/>
</dbReference>
<dbReference type="ExpressionAtlas" id="K7UPS5">
    <property type="expression patterns" value="baseline and differential"/>
</dbReference>
<dbReference type="GO" id="GO:0005634">
    <property type="term" value="C:nucleus"/>
    <property type="evidence" value="ECO:0000318"/>
    <property type="project" value="GO_Central"/>
</dbReference>
<dbReference type="GO" id="GO:0000987">
    <property type="term" value="F:cis-regulatory region sequence-specific DNA binding"/>
    <property type="evidence" value="ECO:0000318"/>
    <property type="project" value="GO_Central"/>
</dbReference>
<dbReference type="GO" id="GO:0003700">
    <property type="term" value="F:DNA-binding transcription factor activity"/>
    <property type="evidence" value="ECO:0000314"/>
    <property type="project" value="UniProtKB"/>
</dbReference>
<dbReference type="GO" id="GO:0043565">
    <property type="term" value="F:sequence-specific DNA binding"/>
    <property type="evidence" value="ECO:0000314"/>
    <property type="project" value="UniProtKB"/>
</dbReference>
<dbReference type="GO" id="GO:0000976">
    <property type="term" value="F:transcription cis-regulatory region binding"/>
    <property type="evidence" value="ECO:0000314"/>
    <property type="project" value="UniProtKB"/>
</dbReference>
<dbReference type="GO" id="GO:0045892">
    <property type="term" value="P:negative regulation of DNA-templated transcription"/>
    <property type="evidence" value="ECO:0000314"/>
    <property type="project" value="UniProtKB"/>
</dbReference>
<dbReference type="GO" id="GO:0006355">
    <property type="term" value="P:regulation of DNA-templated transcription"/>
    <property type="evidence" value="ECO:0000318"/>
    <property type="project" value="GO_Central"/>
</dbReference>
<dbReference type="GO" id="GO:1901141">
    <property type="term" value="P:regulation of lignin biosynthetic process"/>
    <property type="evidence" value="ECO:0000315"/>
    <property type="project" value="UniProtKB"/>
</dbReference>
<dbReference type="CDD" id="cd00167">
    <property type="entry name" value="SANT"/>
    <property type="match status" value="2"/>
</dbReference>
<dbReference type="FunFam" id="1.10.10.60:FF:000228">
    <property type="entry name" value="Myb-related protein 308"/>
    <property type="match status" value="1"/>
</dbReference>
<dbReference type="FunFam" id="1.10.10.60:FF:000001">
    <property type="entry name" value="MYB-related transcription factor"/>
    <property type="match status" value="1"/>
</dbReference>
<dbReference type="Gene3D" id="1.10.10.60">
    <property type="entry name" value="Homeodomain-like"/>
    <property type="match status" value="2"/>
</dbReference>
<dbReference type="InterPro" id="IPR009057">
    <property type="entry name" value="Homeodomain-like_sf"/>
</dbReference>
<dbReference type="InterPro" id="IPR017930">
    <property type="entry name" value="Myb_dom"/>
</dbReference>
<dbReference type="InterPro" id="IPR015495">
    <property type="entry name" value="Myb_TF_plants"/>
</dbReference>
<dbReference type="InterPro" id="IPR001005">
    <property type="entry name" value="SANT/Myb"/>
</dbReference>
<dbReference type="PANTHER" id="PTHR47994">
    <property type="entry name" value="F14D16.11-RELATED"/>
    <property type="match status" value="1"/>
</dbReference>
<dbReference type="PANTHER" id="PTHR47994:SF5">
    <property type="entry name" value="F14D16.11-RELATED"/>
    <property type="match status" value="1"/>
</dbReference>
<dbReference type="Pfam" id="PF00249">
    <property type="entry name" value="Myb_DNA-binding"/>
    <property type="match status" value="2"/>
</dbReference>
<dbReference type="SMART" id="SM00717">
    <property type="entry name" value="SANT"/>
    <property type="match status" value="2"/>
</dbReference>
<dbReference type="SUPFAM" id="SSF46689">
    <property type="entry name" value="Homeodomain-like"/>
    <property type="match status" value="1"/>
</dbReference>
<dbReference type="PROSITE" id="PS51294">
    <property type="entry name" value="HTH_MYB"/>
    <property type="match status" value="2"/>
</dbReference>
<dbReference type="PROSITE" id="PS50090">
    <property type="entry name" value="MYB_LIKE"/>
    <property type="match status" value="2"/>
</dbReference>